<protein>
    <recommendedName>
        <fullName evidence="1">Arginine--tRNA ligase</fullName>
        <ecNumber evidence="1">6.1.1.19</ecNumber>
    </recommendedName>
    <alternativeName>
        <fullName evidence="1">Arginyl-tRNA synthetase</fullName>
        <shortName evidence="1">ArgRS</shortName>
    </alternativeName>
</protein>
<name>SYR_THEKO</name>
<feature type="chain" id="PRO_0000151654" description="Arginine--tRNA ligase">
    <location>
        <begin position="1"/>
        <end position="642"/>
    </location>
</feature>
<feature type="short sequence motif" description="'HIGH' region">
    <location>
        <begin position="133"/>
        <end position="143"/>
    </location>
</feature>
<evidence type="ECO:0000255" key="1">
    <source>
        <dbReference type="HAMAP-Rule" id="MF_00123"/>
    </source>
</evidence>
<sequence>MVYKEVQERVRLALRQALDEMLHEAGKEWDGEITFDDTPSIELGDFGTAVSFQLARVFRKAPKFIAEELVGRVKEKLPEEIRDVKAVNGYINFYLDYEFFGKALVREILEKGEKYGESELGSGKKVIVEHTSVNPTKPLHMGHARNAVLGDTMARIMRKLGYTVEVQNYIDDLGVQFAQVLWGYLNLKEEFERIEAELREKGLKEDFIDHVMGLLYVEVNKKLEENPEVDKEVRELMKKLEEGDNEIAEVGRKLAERVVRAQMLTTYRMGITYDLLSWESDIMKSGIFGEAYGLIEKNENFFWATEGKYKGAFVMDLRKLFPDMKNPFLVLRRSDGTATYTGKDIAYHLWKFGKVKADMLYKLWDRVEDHETWTTAPDGKEMPGKFGRADIVINVIGAEQKHPQMAIKYALQLLGFEDAAENFHHLAYEHVVRPEGSFSGRKGTWVGFTVDEVLNEAVQRARELVEQKNPNLSDEEKDEIAEAVGVGAVRYNLVKYSPDKVITFRWEDVLNFEGDSAPYLQYAHARCASILRKAEESGVETDWNALLEKADFSKLTNREKELIKFLAKFPEVLESAGRDVKPHLVPAYLNELASLFNRFYMDHPVLKAEEGIREERLLLVLAVKQVLRNGLDVLGIKAPERM</sequence>
<keyword id="KW-0030">Aminoacyl-tRNA synthetase</keyword>
<keyword id="KW-0067">ATP-binding</keyword>
<keyword id="KW-0963">Cytoplasm</keyword>
<keyword id="KW-0436">Ligase</keyword>
<keyword id="KW-0547">Nucleotide-binding</keyword>
<keyword id="KW-0648">Protein biosynthesis</keyword>
<keyword id="KW-1185">Reference proteome</keyword>
<gene>
    <name evidence="1" type="primary">argS</name>
    <name type="ordered locus">TK1235</name>
</gene>
<dbReference type="EC" id="6.1.1.19" evidence="1"/>
<dbReference type="EMBL" id="AP006878">
    <property type="protein sequence ID" value="BAD85424.1"/>
    <property type="molecule type" value="Genomic_DNA"/>
</dbReference>
<dbReference type="RefSeq" id="WP_011250186.1">
    <property type="nucleotide sequence ID" value="NC_006624.1"/>
</dbReference>
<dbReference type="SMR" id="Q5JGH7"/>
<dbReference type="FunCoup" id="Q5JGH7">
    <property type="interactions" value="196"/>
</dbReference>
<dbReference type="STRING" id="69014.TK1235"/>
<dbReference type="EnsemblBacteria" id="BAD85424">
    <property type="protein sequence ID" value="BAD85424"/>
    <property type="gene ID" value="TK1235"/>
</dbReference>
<dbReference type="GeneID" id="78447751"/>
<dbReference type="KEGG" id="tko:TK1235"/>
<dbReference type="PATRIC" id="fig|69014.16.peg.1209"/>
<dbReference type="eggNOG" id="arCOG00487">
    <property type="taxonomic scope" value="Archaea"/>
</dbReference>
<dbReference type="HOGENOM" id="CLU_006406_6_1_2"/>
<dbReference type="InParanoid" id="Q5JGH7"/>
<dbReference type="OrthoDB" id="372102at2157"/>
<dbReference type="PhylomeDB" id="Q5JGH7"/>
<dbReference type="Proteomes" id="UP000000536">
    <property type="component" value="Chromosome"/>
</dbReference>
<dbReference type="GO" id="GO:0005737">
    <property type="term" value="C:cytoplasm"/>
    <property type="evidence" value="ECO:0007669"/>
    <property type="project" value="UniProtKB-SubCell"/>
</dbReference>
<dbReference type="GO" id="GO:0004814">
    <property type="term" value="F:arginine-tRNA ligase activity"/>
    <property type="evidence" value="ECO:0000318"/>
    <property type="project" value="GO_Central"/>
</dbReference>
<dbReference type="GO" id="GO:0005524">
    <property type="term" value="F:ATP binding"/>
    <property type="evidence" value="ECO:0007669"/>
    <property type="project" value="UniProtKB-UniRule"/>
</dbReference>
<dbReference type="GO" id="GO:0006420">
    <property type="term" value="P:arginyl-tRNA aminoacylation"/>
    <property type="evidence" value="ECO:0000318"/>
    <property type="project" value="GO_Central"/>
</dbReference>
<dbReference type="CDD" id="cd07956">
    <property type="entry name" value="Anticodon_Ia_Arg"/>
    <property type="match status" value="1"/>
</dbReference>
<dbReference type="CDD" id="cd00671">
    <property type="entry name" value="ArgRS_core"/>
    <property type="match status" value="1"/>
</dbReference>
<dbReference type="FunFam" id="1.10.730.10:FF:000008">
    <property type="entry name" value="Arginine--tRNA ligase"/>
    <property type="match status" value="1"/>
</dbReference>
<dbReference type="FunFam" id="3.30.1360.70:FF:000008">
    <property type="entry name" value="Arginine--tRNA ligase"/>
    <property type="match status" value="1"/>
</dbReference>
<dbReference type="FunFam" id="3.40.50.620:FF:000190">
    <property type="entry name" value="Arginine--tRNA ligase"/>
    <property type="match status" value="1"/>
</dbReference>
<dbReference type="Gene3D" id="3.30.1360.70">
    <property type="entry name" value="Arginyl tRNA synthetase N-terminal domain"/>
    <property type="match status" value="1"/>
</dbReference>
<dbReference type="Gene3D" id="3.40.50.620">
    <property type="entry name" value="HUPs"/>
    <property type="match status" value="1"/>
</dbReference>
<dbReference type="Gene3D" id="1.10.730.10">
    <property type="entry name" value="Isoleucyl-tRNA Synthetase, Domain 1"/>
    <property type="match status" value="1"/>
</dbReference>
<dbReference type="HAMAP" id="MF_00123">
    <property type="entry name" value="Arg_tRNA_synth"/>
    <property type="match status" value="1"/>
</dbReference>
<dbReference type="InterPro" id="IPR001412">
    <property type="entry name" value="aa-tRNA-synth_I_CS"/>
</dbReference>
<dbReference type="InterPro" id="IPR001278">
    <property type="entry name" value="Arg-tRNA-ligase"/>
</dbReference>
<dbReference type="InterPro" id="IPR005148">
    <property type="entry name" value="Arg-tRNA-synth_N"/>
</dbReference>
<dbReference type="InterPro" id="IPR036695">
    <property type="entry name" value="Arg-tRNA-synth_N_sf"/>
</dbReference>
<dbReference type="InterPro" id="IPR035684">
    <property type="entry name" value="ArgRS_core"/>
</dbReference>
<dbReference type="InterPro" id="IPR008909">
    <property type="entry name" value="DALR_anticod-bd"/>
</dbReference>
<dbReference type="InterPro" id="IPR014729">
    <property type="entry name" value="Rossmann-like_a/b/a_fold"/>
</dbReference>
<dbReference type="InterPro" id="IPR009080">
    <property type="entry name" value="tRNAsynth_Ia_anticodon-bd"/>
</dbReference>
<dbReference type="NCBIfam" id="TIGR00456">
    <property type="entry name" value="argS"/>
    <property type="match status" value="1"/>
</dbReference>
<dbReference type="NCBIfam" id="NF002447">
    <property type="entry name" value="PRK01611.3-4"/>
    <property type="match status" value="1"/>
</dbReference>
<dbReference type="PANTHER" id="PTHR11956:SF5">
    <property type="entry name" value="ARGININE--TRNA LIGASE, CYTOPLASMIC"/>
    <property type="match status" value="1"/>
</dbReference>
<dbReference type="PANTHER" id="PTHR11956">
    <property type="entry name" value="ARGINYL-TRNA SYNTHETASE"/>
    <property type="match status" value="1"/>
</dbReference>
<dbReference type="Pfam" id="PF03485">
    <property type="entry name" value="Arg_tRNA_synt_N"/>
    <property type="match status" value="1"/>
</dbReference>
<dbReference type="Pfam" id="PF05746">
    <property type="entry name" value="DALR_1"/>
    <property type="match status" value="1"/>
</dbReference>
<dbReference type="Pfam" id="PF00750">
    <property type="entry name" value="tRNA-synt_1d"/>
    <property type="match status" value="2"/>
</dbReference>
<dbReference type="PRINTS" id="PR01038">
    <property type="entry name" value="TRNASYNTHARG"/>
</dbReference>
<dbReference type="SMART" id="SM01016">
    <property type="entry name" value="Arg_tRNA_synt_N"/>
    <property type="match status" value="1"/>
</dbReference>
<dbReference type="SMART" id="SM00836">
    <property type="entry name" value="DALR_1"/>
    <property type="match status" value="1"/>
</dbReference>
<dbReference type="SUPFAM" id="SSF47323">
    <property type="entry name" value="Anticodon-binding domain of a subclass of class I aminoacyl-tRNA synthetases"/>
    <property type="match status" value="1"/>
</dbReference>
<dbReference type="SUPFAM" id="SSF55190">
    <property type="entry name" value="Arginyl-tRNA synthetase (ArgRS), N-terminal 'additional' domain"/>
    <property type="match status" value="1"/>
</dbReference>
<dbReference type="SUPFAM" id="SSF52374">
    <property type="entry name" value="Nucleotidylyl transferase"/>
    <property type="match status" value="1"/>
</dbReference>
<dbReference type="PROSITE" id="PS00178">
    <property type="entry name" value="AA_TRNA_LIGASE_I"/>
    <property type="match status" value="1"/>
</dbReference>
<proteinExistence type="inferred from homology"/>
<organism>
    <name type="scientific">Thermococcus kodakarensis (strain ATCC BAA-918 / JCM 12380 / KOD1)</name>
    <name type="common">Pyrococcus kodakaraensis (strain KOD1)</name>
    <dbReference type="NCBI Taxonomy" id="69014"/>
    <lineage>
        <taxon>Archaea</taxon>
        <taxon>Methanobacteriati</taxon>
        <taxon>Methanobacteriota</taxon>
        <taxon>Thermococci</taxon>
        <taxon>Thermococcales</taxon>
        <taxon>Thermococcaceae</taxon>
        <taxon>Thermococcus</taxon>
    </lineage>
</organism>
<comment type="catalytic activity">
    <reaction evidence="1">
        <text>tRNA(Arg) + L-arginine + ATP = L-arginyl-tRNA(Arg) + AMP + diphosphate</text>
        <dbReference type="Rhea" id="RHEA:20301"/>
        <dbReference type="Rhea" id="RHEA-COMP:9658"/>
        <dbReference type="Rhea" id="RHEA-COMP:9673"/>
        <dbReference type="ChEBI" id="CHEBI:30616"/>
        <dbReference type="ChEBI" id="CHEBI:32682"/>
        <dbReference type="ChEBI" id="CHEBI:33019"/>
        <dbReference type="ChEBI" id="CHEBI:78442"/>
        <dbReference type="ChEBI" id="CHEBI:78513"/>
        <dbReference type="ChEBI" id="CHEBI:456215"/>
        <dbReference type="EC" id="6.1.1.19"/>
    </reaction>
</comment>
<comment type="subcellular location">
    <subcellularLocation>
        <location evidence="1">Cytoplasm</location>
    </subcellularLocation>
</comment>
<comment type="similarity">
    <text evidence="1">Belongs to the class-I aminoacyl-tRNA synthetase family.</text>
</comment>
<reference key="1">
    <citation type="journal article" date="2005" name="Genome Res.">
        <title>Complete genome sequence of the hyperthermophilic archaeon Thermococcus kodakaraensis KOD1 and comparison with Pyrococcus genomes.</title>
        <authorList>
            <person name="Fukui T."/>
            <person name="Atomi H."/>
            <person name="Kanai T."/>
            <person name="Matsumi R."/>
            <person name="Fujiwara S."/>
            <person name="Imanaka T."/>
        </authorList>
    </citation>
    <scope>NUCLEOTIDE SEQUENCE [LARGE SCALE GENOMIC DNA]</scope>
    <source>
        <strain>ATCC BAA-918 / JCM 12380 / KOD1</strain>
    </source>
</reference>
<accession>Q5JGH7</accession>